<comment type="function">
    <text evidence="4 5">Can convert indole-3-acetonitrile to the plant hormone indole-3-acetic acid.</text>
</comment>
<comment type="catalytic activity">
    <reaction evidence="2">
        <text>a nitrile + 2 H2O = a carboxylate + NH4(+)</text>
        <dbReference type="Rhea" id="RHEA:21724"/>
        <dbReference type="ChEBI" id="CHEBI:15377"/>
        <dbReference type="ChEBI" id="CHEBI:18379"/>
        <dbReference type="ChEBI" id="CHEBI:28938"/>
        <dbReference type="ChEBI" id="CHEBI:29067"/>
        <dbReference type="EC" id="3.5.5.1"/>
    </reaction>
</comment>
<comment type="subcellular location">
    <subcellularLocation>
        <location>Cell membrane</location>
        <topology>Peripheral membrane protein</topology>
        <orientation>Cytoplasmic side</orientation>
    </subcellularLocation>
    <text>Tightly associated with the plasma membrane.</text>
</comment>
<comment type="developmental stage">
    <text>Barely detectable in young rosettes, but is strongly expressed during bolting, flowering, and especially fruit development.</text>
</comment>
<comment type="induction">
    <text evidence="3">By indole-3-acetonitrile, abscisic acid (ABA), salicylic acid (SA), sodium nitroprusside (SNP), salt stress and dehydration stress.</text>
</comment>
<comment type="similarity">
    <text evidence="6">Belongs to the carbon-nitrogen hydrolase superfamily. Nitrilase family.</text>
</comment>
<name>NRL2_ARATH</name>
<evidence type="ECO:0000255" key="1">
    <source>
        <dbReference type="PROSITE-ProRule" id="PRU00054"/>
    </source>
</evidence>
<evidence type="ECO:0000255" key="2">
    <source>
        <dbReference type="PROSITE-ProRule" id="PRU10105"/>
    </source>
</evidence>
<evidence type="ECO:0000269" key="3">
    <source>
    </source>
</evidence>
<evidence type="ECO:0000269" key="4">
    <source>
    </source>
</evidence>
<evidence type="ECO:0000269" key="5">
    <source>
    </source>
</evidence>
<evidence type="ECO:0000305" key="6"/>
<evidence type="ECO:0007744" key="7">
    <source>
    </source>
</evidence>
<dbReference type="EC" id="3.5.5.1"/>
<dbReference type="EMBL" id="X68305">
    <property type="protein sequence ID" value="CAA48377.1"/>
    <property type="molecule type" value="mRNA"/>
</dbReference>
<dbReference type="EMBL" id="U09958">
    <property type="protein sequence ID" value="AAB60275.1"/>
    <property type="molecule type" value="mRNA"/>
</dbReference>
<dbReference type="EMBL" id="U38845">
    <property type="protein sequence ID" value="AAB05220.1"/>
    <property type="molecule type" value="Genomic_DNA"/>
</dbReference>
<dbReference type="EMBL" id="AL353865">
    <property type="protein sequence ID" value="CAB88998.1"/>
    <property type="molecule type" value="Genomic_DNA"/>
</dbReference>
<dbReference type="EMBL" id="CP002686">
    <property type="protein sequence ID" value="AEE77886.1"/>
    <property type="molecule type" value="Genomic_DNA"/>
</dbReference>
<dbReference type="EMBL" id="AY088028">
    <property type="protein sequence ID" value="AAM65574.1"/>
    <property type="molecule type" value="mRNA"/>
</dbReference>
<dbReference type="PIR" id="S31969">
    <property type="entry name" value="S31969"/>
</dbReference>
<dbReference type="PIR" id="T52262">
    <property type="entry name" value="T52262"/>
</dbReference>
<dbReference type="RefSeq" id="NP_190016.1">
    <property type="nucleotide sequence ID" value="NM_114298.3"/>
</dbReference>
<dbReference type="SMR" id="P32962"/>
<dbReference type="BioGRID" id="8875">
    <property type="interactions" value="1"/>
</dbReference>
<dbReference type="FunCoup" id="P32962">
    <property type="interactions" value="249"/>
</dbReference>
<dbReference type="STRING" id="3702.P32962"/>
<dbReference type="iPTMnet" id="P32962"/>
<dbReference type="PaxDb" id="3702-AT3G44300.1"/>
<dbReference type="ProteomicsDB" id="249395"/>
<dbReference type="EnsemblPlants" id="AT3G44300.1">
    <property type="protein sequence ID" value="AT3G44300.1"/>
    <property type="gene ID" value="AT3G44300"/>
</dbReference>
<dbReference type="GeneID" id="823555"/>
<dbReference type="Gramene" id="AT3G44300.1">
    <property type="protein sequence ID" value="AT3G44300.1"/>
    <property type="gene ID" value="AT3G44300"/>
</dbReference>
<dbReference type="KEGG" id="ath:AT3G44300"/>
<dbReference type="Araport" id="AT3G44300"/>
<dbReference type="TAIR" id="AT3G44300">
    <property type="gene designation" value="NIT2"/>
</dbReference>
<dbReference type="eggNOG" id="KOG0805">
    <property type="taxonomic scope" value="Eukaryota"/>
</dbReference>
<dbReference type="HOGENOM" id="CLU_030130_6_1_1"/>
<dbReference type="InParanoid" id="P32962"/>
<dbReference type="OrthoDB" id="10250282at2759"/>
<dbReference type="PhylomeDB" id="P32962"/>
<dbReference type="BioCyc" id="ARA:AT3G44300-MONOMER"/>
<dbReference type="BioCyc" id="MetaCyc:AT3G44300-MONOMER"/>
<dbReference type="BRENDA" id="3.5.5.1">
    <property type="organism ID" value="399"/>
</dbReference>
<dbReference type="CD-CODE" id="4299E36E">
    <property type="entry name" value="Nucleolus"/>
</dbReference>
<dbReference type="PRO" id="PR:P32962"/>
<dbReference type="Proteomes" id="UP000006548">
    <property type="component" value="Chromosome 3"/>
</dbReference>
<dbReference type="ExpressionAtlas" id="P32962">
    <property type="expression patterns" value="baseline and differential"/>
</dbReference>
<dbReference type="GO" id="GO:0005829">
    <property type="term" value="C:cytosol"/>
    <property type="evidence" value="ECO:0007005"/>
    <property type="project" value="TAIR"/>
</dbReference>
<dbReference type="GO" id="GO:0005886">
    <property type="term" value="C:plasma membrane"/>
    <property type="evidence" value="ECO:0007669"/>
    <property type="project" value="UniProtKB-SubCell"/>
</dbReference>
<dbReference type="GO" id="GO:0080061">
    <property type="term" value="F:indole-3-acetonitrile nitrilase activity"/>
    <property type="evidence" value="ECO:0000314"/>
    <property type="project" value="TAIR"/>
</dbReference>
<dbReference type="GO" id="GO:0080109">
    <property type="term" value="F:indole-3-acetonitrile nitrile hydratase activity"/>
    <property type="evidence" value="ECO:0000314"/>
    <property type="project" value="TAIR"/>
</dbReference>
<dbReference type="GO" id="GO:0003729">
    <property type="term" value="F:mRNA binding"/>
    <property type="evidence" value="ECO:0000314"/>
    <property type="project" value="TAIR"/>
</dbReference>
<dbReference type="GO" id="GO:0000257">
    <property type="term" value="F:nitrilase activity"/>
    <property type="evidence" value="ECO:0000314"/>
    <property type="project" value="TAIR"/>
</dbReference>
<dbReference type="GO" id="GO:0009684">
    <property type="term" value="P:indoleacetic acid biosynthetic process"/>
    <property type="evidence" value="ECO:0000304"/>
    <property type="project" value="TAIR"/>
</dbReference>
<dbReference type="CDD" id="cd07564">
    <property type="entry name" value="nitrilases_CHs"/>
    <property type="match status" value="1"/>
</dbReference>
<dbReference type="FunFam" id="3.60.110.10:FF:000006">
    <property type="entry name" value="Bifunctional nitrilase/nitrile hydratase NIT4B"/>
    <property type="match status" value="1"/>
</dbReference>
<dbReference type="Gene3D" id="3.60.110.10">
    <property type="entry name" value="Carbon-nitrogen hydrolase"/>
    <property type="match status" value="1"/>
</dbReference>
<dbReference type="InterPro" id="IPR003010">
    <property type="entry name" value="C-N_Hydrolase"/>
</dbReference>
<dbReference type="InterPro" id="IPR036526">
    <property type="entry name" value="C-N_Hydrolase_sf"/>
</dbReference>
<dbReference type="InterPro" id="IPR000132">
    <property type="entry name" value="Nitrilase/CN_hydratase_CS"/>
</dbReference>
<dbReference type="InterPro" id="IPR044149">
    <property type="entry name" value="Nitrilases_CHs"/>
</dbReference>
<dbReference type="PANTHER" id="PTHR46044">
    <property type="entry name" value="NITRILASE"/>
    <property type="match status" value="1"/>
</dbReference>
<dbReference type="PANTHER" id="PTHR46044:SF11">
    <property type="entry name" value="NITRILASE 1-RELATED"/>
    <property type="match status" value="1"/>
</dbReference>
<dbReference type="Pfam" id="PF00795">
    <property type="entry name" value="CN_hydrolase"/>
    <property type="match status" value="1"/>
</dbReference>
<dbReference type="SUPFAM" id="SSF56317">
    <property type="entry name" value="Carbon-nitrogen hydrolase"/>
    <property type="match status" value="1"/>
</dbReference>
<dbReference type="PROSITE" id="PS50263">
    <property type="entry name" value="CN_HYDROLASE"/>
    <property type="match status" value="1"/>
</dbReference>
<dbReference type="PROSITE" id="PS00920">
    <property type="entry name" value="NITRIL_CHT_1"/>
    <property type="match status" value="1"/>
</dbReference>
<dbReference type="PROSITE" id="PS00921">
    <property type="entry name" value="NITRIL_CHT_2"/>
    <property type="match status" value="1"/>
</dbReference>
<gene>
    <name type="primary">NIT2</name>
    <name type="ordered locus">At3g44300</name>
    <name type="ORF">T10D17_90</name>
</gene>
<keyword id="KW-0007">Acetylation</keyword>
<keyword id="KW-1003">Cell membrane</keyword>
<keyword id="KW-0378">Hydrolase</keyword>
<keyword id="KW-0472">Membrane</keyword>
<keyword id="KW-1185">Reference proteome</keyword>
<accession>P32962</accession>
<accession>Q96505</accession>
<sequence>MSTSENTPFNGVASSTIVRATIVQASTVYNDTPATLEKANKFIVEAASKGSELVVFPEAFIGGYPRGFRFGLGVGVHNEEGRDEFRKYHASAIKVPGPEVEKLAELAGKNNVYLVMGAIEKDGYTLYCTALFFSPQGQFLGKHRKLMPTSLERCIWGQGDGSTIPVYDTPIGKLGAAICWENRMPLYRTALYAKGIELYCAPTADGSKEWQSSMLHIAIEGGCFVLSACQFCLRKDFPDHPDYLFTDWYDDKEPDSIVSQGGSVIISPLGQVLAGPNFESEGLITADLDLGDVARAKLYFDSVGHYSRPDVLHLTVNEHPKKPVTFISKVEKAEDDSNK</sequence>
<reference key="1">
    <citation type="journal article" date="1994" name="Proc. Natl. Acad. Sci. U.S.A.">
        <title>Molecular characterization of two cloned nitrilases from Arabidopsis thaliana: key enzymes in biosynthesis of the plant hormone indole-3-acetic acid.</title>
        <authorList>
            <person name="Bartling D."/>
            <person name="Seedorf M."/>
            <person name="Schmidt R.C."/>
            <person name="Weiler E.W."/>
        </authorList>
    </citation>
    <scope>NUCLEOTIDE SEQUENCE [MRNA]</scope>
    <scope>FUNCTION</scope>
    <source>
        <strain>cv. Landsberg erecta</strain>
        <tissue>Leaf</tissue>
    </source>
</reference>
<reference key="2">
    <citation type="journal article" date="1994" name="Proc. Natl. Acad. Sci. U.S.A.">
        <title>Differential regulation of an auxin-producing nitrilase gene family in Arabidopsis thaliana.</title>
        <authorList>
            <person name="Bartel B."/>
            <person name="Fink G.R."/>
        </authorList>
    </citation>
    <scope>NUCLEOTIDE SEQUENCE [MRNA]</scope>
    <scope>FUNCTION</scope>
    <source>
        <strain>cv. Columbia</strain>
    </source>
</reference>
<reference key="3">
    <citation type="online journal article" date="1996" name="Plant Gene Register">
        <title>Nucleotide sequence of a pathogen induced nitrilase gene from Arabidopsis thaliana: Nit2.</title>
        <authorList>
            <person name="Zhou L."/>
            <person name="Bartel B."/>
            <person name="Thornburg R.W."/>
        </authorList>
        <locator>PGR96-006</locator>
    </citation>
    <scope>NUCLEOTIDE SEQUENCE [GENOMIC DNA]</scope>
    <source>
        <strain>cv. Columbia</strain>
    </source>
</reference>
<reference key="4">
    <citation type="journal article" date="2000" name="Nature">
        <title>Sequence and analysis of chromosome 3 of the plant Arabidopsis thaliana.</title>
        <authorList>
            <person name="Salanoubat M."/>
            <person name="Lemcke K."/>
            <person name="Rieger M."/>
            <person name="Ansorge W."/>
            <person name="Unseld M."/>
            <person name="Fartmann B."/>
            <person name="Valle G."/>
            <person name="Bloecker H."/>
            <person name="Perez-Alonso M."/>
            <person name="Obermaier B."/>
            <person name="Delseny M."/>
            <person name="Boutry M."/>
            <person name="Grivell L.A."/>
            <person name="Mache R."/>
            <person name="Puigdomenech P."/>
            <person name="De Simone V."/>
            <person name="Choisne N."/>
            <person name="Artiguenave F."/>
            <person name="Robert C."/>
            <person name="Brottier P."/>
            <person name="Wincker P."/>
            <person name="Cattolico L."/>
            <person name="Weissenbach J."/>
            <person name="Saurin W."/>
            <person name="Quetier F."/>
            <person name="Schaefer M."/>
            <person name="Mueller-Auer S."/>
            <person name="Gabel C."/>
            <person name="Fuchs M."/>
            <person name="Benes V."/>
            <person name="Wurmbach E."/>
            <person name="Drzonek H."/>
            <person name="Erfle H."/>
            <person name="Jordan N."/>
            <person name="Bangert S."/>
            <person name="Wiedelmann R."/>
            <person name="Kranz H."/>
            <person name="Voss H."/>
            <person name="Holland R."/>
            <person name="Brandt P."/>
            <person name="Nyakatura G."/>
            <person name="Vezzi A."/>
            <person name="D'Angelo M."/>
            <person name="Pallavicini A."/>
            <person name="Toppo S."/>
            <person name="Simionati B."/>
            <person name="Conrad A."/>
            <person name="Hornischer K."/>
            <person name="Kauer G."/>
            <person name="Loehnert T.-H."/>
            <person name="Nordsiek G."/>
            <person name="Reichelt J."/>
            <person name="Scharfe M."/>
            <person name="Schoen O."/>
            <person name="Bargues M."/>
            <person name="Terol J."/>
            <person name="Climent J."/>
            <person name="Navarro P."/>
            <person name="Collado C."/>
            <person name="Perez-Perez A."/>
            <person name="Ottenwaelder B."/>
            <person name="Duchemin D."/>
            <person name="Cooke R."/>
            <person name="Laudie M."/>
            <person name="Berger-Llauro C."/>
            <person name="Purnelle B."/>
            <person name="Masuy D."/>
            <person name="de Haan M."/>
            <person name="Maarse A.C."/>
            <person name="Alcaraz J.-P."/>
            <person name="Cottet A."/>
            <person name="Casacuberta E."/>
            <person name="Monfort A."/>
            <person name="Argiriou A."/>
            <person name="Flores M."/>
            <person name="Liguori R."/>
            <person name="Vitale D."/>
            <person name="Mannhaupt G."/>
            <person name="Haase D."/>
            <person name="Schoof H."/>
            <person name="Rudd S."/>
            <person name="Zaccaria P."/>
            <person name="Mewes H.-W."/>
            <person name="Mayer K.F.X."/>
            <person name="Kaul S."/>
            <person name="Town C.D."/>
            <person name="Koo H.L."/>
            <person name="Tallon L.J."/>
            <person name="Jenkins J."/>
            <person name="Rooney T."/>
            <person name="Rizzo M."/>
            <person name="Walts A."/>
            <person name="Utterback T."/>
            <person name="Fujii C.Y."/>
            <person name="Shea T.P."/>
            <person name="Creasy T.H."/>
            <person name="Haas B."/>
            <person name="Maiti R."/>
            <person name="Wu D."/>
            <person name="Peterson J."/>
            <person name="Van Aken S."/>
            <person name="Pai G."/>
            <person name="Militscher J."/>
            <person name="Sellers P."/>
            <person name="Gill J.E."/>
            <person name="Feldblyum T.V."/>
            <person name="Preuss D."/>
            <person name="Lin X."/>
            <person name="Nierman W.C."/>
            <person name="Salzberg S.L."/>
            <person name="White O."/>
            <person name="Venter J.C."/>
            <person name="Fraser C.M."/>
            <person name="Kaneko T."/>
            <person name="Nakamura Y."/>
            <person name="Sato S."/>
            <person name="Kato T."/>
            <person name="Asamizu E."/>
            <person name="Sasamoto S."/>
            <person name="Kimura T."/>
            <person name="Idesawa K."/>
            <person name="Kawashima K."/>
            <person name="Kishida Y."/>
            <person name="Kiyokawa C."/>
            <person name="Kohara M."/>
            <person name="Matsumoto M."/>
            <person name="Matsuno A."/>
            <person name="Muraki A."/>
            <person name="Nakayama S."/>
            <person name="Nakazaki N."/>
            <person name="Shinpo S."/>
            <person name="Takeuchi C."/>
            <person name="Wada T."/>
            <person name="Watanabe A."/>
            <person name="Yamada M."/>
            <person name="Yasuda M."/>
            <person name="Tabata S."/>
        </authorList>
    </citation>
    <scope>NUCLEOTIDE SEQUENCE [LARGE SCALE GENOMIC DNA]</scope>
    <source>
        <strain>cv. Columbia</strain>
    </source>
</reference>
<reference key="5">
    <citation type="journal article" date="2017" name="Plant J.">
        <title>Araport11: a complete reannotation of the Arabidopsis thaliana reference genome.</title>
        <authorList>
            <person name="Cheng C.Y."/>
            <person name="Krishnakumar V."/>
            <person name="Chan A.P."/>
            <person name="Thibaud-Nissen F."/>
            <person name="Schobel S."/>
            <person name="Town C.D."/>
        </authorList>
    </citation>
    <scope>GENOME REANNOTATION</scope>
    <source>
        <strain>cv. Columbia</strain>
    </source>
</reference>
<reference key="6">
    <citation type="submission" date="2002-03" db="EMBL/GenBank/DDBJ databases">
        <title>Full-length cDNA from Arabidopsis thaliana.</title>
        <authorList>
            <person name="Brover V.V."/>
            <person name="Troukhan M.E."/>
            <person name="Alexandrov N.A."/>
            <person name="Lu Y.-P."/>
            <person name="Flavell R.B."/>
            <person name="Feldmann K.A."/>
        </authorList>
    </citation>
    <scope>NUCLEOTIDE SEQUENCE [LARGE SCALE MRNA]</scope>
</reference>
<reference key="7">
    <citation type="journal article" date="2007" name="Mol. Cell. Proteomics">
        <title>Multidimensional protein identification technology (MudPIT) analysis of ubiquitinated proteins in plants.</title>
        <authorList>
            <person name="Maor R."/>
            <person name="Jones A."/>
            <person name="Nuehse T.S."/>
            <person name="Studholme D.J."/>
            <person name="Peck S.C."/>
            <person name="Shirasu K."/>
        </authorList>
    </citation>
    <scope>IDENTIFICATION BY MASS SPECTROMETRY [LARGE SCALE ANALYSIS]</scope>
    <source>
        <strain>cv. Landsberg erecta</strain>
    </source>
</reference>
<reference key="8">
    <citation type="journal article" date="2012" name="Mol. Cell. Proteomics">
        <title>Comparative large-scale characterisation of plant vs. mammal proteins reveals similar and idiosyncratic N-alpha acetylation features.</title>
        <authorList>
            <person name="Bienvenut W.V."/>
            <person name="Sumpton D."/>
            <person name="Martinez A."/>
            <person name="Lilla S."/>
            <person name="Espagne C."/>
            <person name="Meinnel T."/>
            <person name="Giglione C."/>
        </authorList>
    </citation>
    <scope>ACETYLATION [LARGE SCALE ANALYSIS] AT SER-2</scope>
    <scope>CLEAVAGE OF INITIATOR METHIONINE [LARGE SCALE ANALYSIS]</scope>
    <scope>IDENTIFICATION BY MASS SPECTROMETRY [LARGE SCALE ANALYSIS]</scope>
</reference>
<reference key="9">
    <citation type="journal article" date="2012" name="Mol. Cells">
        <title>ATAF2, a NAC transcription factor, binds to the promoter and regulates NIT2 gene expression involved in auxin biosynthesis.</title>
        <authorList>
            <person name="Huh S.U."/>
            <person name="Lee S.B."/>
            <person name="Kim H.H."/>
            <person name="Paek K.H."/>
        </authorList>
    </citation>
    <scope>INDUCTION</scope>
</reference>
<proteinExistence type="evidence at protein level"/>
<feature type="initiator methionine" description="Removed" evidence="7">
    <location>
        <position position="1"/>
    </location>
</feature>
<feature type="chain" id="PRO_0000204037" description="Nitrilase 2">
    <location>
        <begin position="2"/>
        <end position="339"/>
    </location>
</feature>
<feature type="domain" description="CN hydrolase" evidence="1">
    <location>
        <begin position="18"/>
        <end position="290"/>
    </location>
</feature>
<feature type="active site" description="Proton acceptor" evidence="1">
    <location>
        <position position="58"/>
    </location>
</feature>
<feature type="active site" description="Proton donor" evidence="1">
    <location>
        <position position="145"/>
    </location>
</feature>
<feature type="active site" description="Nucleophile" evidence="1 2">
    <location>
        <position position="179"/>
    </location>
</feature>
<feature type="modified residue" description="N-acetylserine" evidence="7">
    <location>
        <position position="2"/>
    </location>
</feature>
<feature type="sequence conflict" description="In Ref. 3; AAB05220." evidence="6" ref="3">
    <original>E</original>
    <variation>G</variation>
    <location>
        <position position="37"/>
    </location>
</feature>
<feature type="sequence conflict" description="In Ref. 3; AAB05220." evidence="6" ref="3">
    <original>S</original>
    <variation>T</variation>
    <location>
        <position position="48"/>
    </location>
</feature>
<organism>
    <name type="scientific">Arabidopsis thaliana</name>
    <name type="common">Mouse-ear cress</name>
    <dbReference type="NCBI Taxonomy" id="3702"/>
    <lineage>
        <taxon>Eukaryota</taxon>
        <taxon>Viridiplantae</taxon>
        <taxon>Streptophyta</taxon>
        <taxon>Embryophyta</taxon>
        <taxon>Tracheophyta</taxon>
        <taxon>Spermatophyta</taxon>
        <taxon>Magnoliopsida</taxon>
        <taxon>eudicotyledons</taxon>
        <taxon>Gunneridae</taxon>
        <taxon>Pentapetalae</taxon>
        <taxon>rosids</taxon>
        <taxon>malvids</taxon>
        <taxon>Brassicales</taxon>
        <taxon>Brassicaceae</taxon>
        <taxon>Camelineae</taxon>
        <taxon>Arabidopsis</taxon>
    </lineage>
</organism>
<protein>
    <recommendedName>
        <fullName>Nitrilase 2</fullName>
        <ecNumber>3.5.5.1</ecNumber>
    </recommendedName>
</protein>